<proteinExistence type="inferred from homology"/>
<reference key="1">
    <citation type="journal article" date="2008" name="Proc. Natl. Acad. Sci. U.S.A.">
        <title>Nitrogen fixation island and rhizosphere competence traits in the genome of root-associated Pseudomonas stutzeri A1501.</title>
        <authorList>
            <person name="Yan Y."/>
            <person name="Yang J."/>
            <person name="Dou Y."/>
            <person name="Chen M."/>
            <person name="Ping S."/>
            <person name="Peng J."/>
            <person name="Lu W."/>
            <person name="Zhang W."/>
            <person name="Yao Z."/>
            <person name="Li H."/>
            <person name="Liu W."/>
            <person name="He S."/>
            <person name="Geng L."/>
            <person name="Zhang X."/>
            <person name="Yang F."/>
            <person name="Yu H."/>
            <person name="Zhan Y."/>
            <person name="Li D."/>
            <person name="Lin Z."/>
            <person name="Wang Y."/>
            <person name="Elmerich C."/>
            <person name="Lin M."/>
            <person name="Jin Q."/>
        </authorList>
    </citation>
    <scope>NUCLEOTIDE SEQUENCE [LARGE SCALE GENOMIC DNA]</scope>
    <source>
        <strain>A1501</strain>
    </source>
</reference>
<keyword id="KW-0963">Cytoplasm</keyword>
<keyword id="KW-0648">Protein biosynthesis</keyword>
<keyword id="KW-0663">Pyridoxal phosphate</keyword>
<keyword id="KW-1185">Reference proteome</keyword>
<keyword id="KW-0711">Selenium</keyword>
<keyword id="KW-0808">Transferase</keyword>
<gene>
    <name evidence="1" type="primary">selA</name>
    <name type="ordered locus">PST_0162</name>
</gene>
<accession>A4VFW8</accession>
<protein>
    <recommendedName>
        <fullName evidence="1">L-seryl-tRNA(Sec) selenium transferase</fullName>
        <ecNumber evidence="1">2.9.1.1</ecNumber>
    </recommendedName>
    <alternativeName>
        <fullName evidence="1">Selenocysteine synthase</fullName>
        <shortName evidence="1">Sec synthase</shortName>
    </alternativeName>
    <alternativeName>
        <fullName evidence="1">Selenocysteinyl-tRNA(Sec) synthase</fullName>
    </alternativeName>
</protein>
<evidence type="ECO:0000255" key="1">
    <source>
        <dbReference type="HAMAP-Rule" id="MF_00423"/>
    </source>
</evidence>
<dbReference type="EC" id="2.9.1.1" evidence="1"/>
<dbReference type="EMBL" id="CP000304">
    <property type="protein sequence ID" value="ABP77869.1"/>
    <property type="molecule type" value="Genomic_DNA"/>
</dbReference>
<dbReference type="RefSeq" id="WP_011911408.1">
    <property type="nucleotide sequence ID" value="NC_009434.1"/>
</dbReference>
<dbReference type="SMR" id="A4VFW8"/>
<dbReference type="KEGG" id="psa:PST_0162"/>
<dbReference type="eggNOG" id="COG1921">
    <property type="taxonomic scope" value="Bacteria"/>
</dbReference>
<dbReference type="HOGENOM" id="CLU_038142_1_0_6"/>
<dbReference type="UniPathway" id="UPA00906">
    <property type="reaction ID" value="UER00896"/>
</dbReference>
<dbReference type="Proteomes" id="UP000000233">
    <property type="component" value="Chromosome"/>
</dbReference>
<dbReference type="GO" id="GO:0005737">
    <property type="term" value="C:cytoplasm"/>
    <property type="evidence" value="ECO:0007669"/>
    <property type="project" value="UniProtKB-SubCell"/>
</dbReference>
<dbReference type="GO" id="GO:0004125">
    <property type="term" value="F:L-seryl-tRNA(Sec) selenium transferase activity"/>
    <property type="evidence" value="ECO:0007669"/>
    <property type="project" value="UniProtKB-UniRule"/>
</dbReference>
<dbReference type="GO" id="GO:0001717">
    <property type="term" value="P:conversion of seryl-tRNAsec to selenocys-tRNAsec"/>
    <property type="evidence" value="ECO:0007669"/>
    <property type="project" value="UniProtKB-UniRule"/>
</dbReference>
<dbReference type="GO" id="GO:0001514">
    <property type="term" value="P:selenocysteine incorporation"/>
    <property type="evidence" value="ECO:0007669"/>
    <property type="project" value="UniProtKB-UniRule"/>
</dbReference>
<dbReference type="FunFam" id="3.40.640.10:FF:000028">
    <property type="entry name" value="L-seryl-tRNA(Sec) selenium transferase"/>
    <property type="match status" value="1"/>
</dbReference>
<dbReference type="Gene3D" id="3.90.1150.180">
    <property type="match status" value="1"/>
</dbReference>
<dbReference type="Gene3D" id="3.40.640.10">
    <property type="entry name" value="Type I PLP-dependent aspartate aminotransferase-like (Major domain)"/>
    <property type="match status" value="1"/>
</dbReference>
<dbReference type="HAMAP" id="MF_00423">
    <property type="entry name" value="SelA"/>
    <property type="match status" value="1"/>
</dbReference>
<dbReference type="InterPro" id="IPR015424">
    <property type="entry name" value="PyrdxlP-dep_Trfase"/>
</dbReference>
<dbReference type="InterPro" id="IPR015421">
    <property type="entry name" value="PyrdxlP-dep_Trfase_major"/>
</dbReference>
<dbReference type="InterPro" id="IPR018319">
    <property type="entry name" value="SelA-like"/>
</dbReference>
<dbReference type="InterPro" id="IPR004534">
    <property type="entry name" value="SelA_trans"/>
</dbReference>
<dbReference type="InterPro" id="IPR025862">
    <property type="entry name" value="SelA_trans_N_dom"/>
</dbReference>
<dbReference type="NCBIfam" id="TIGR00474">
    <property type="entry name" value="selA"/>
    <property type="match status" value="1"/>
</dbReference>
<dbReference type="PANTHER" id="PTHR32328">
    <property type="entry name" value="L-SERYL-TRNA(SEC) SELENIUM TRANSFERASE"/>
    <property type="match status" value="1"/>
</dbReference>
<dbReference type="PANTHER" id="PTHR32328:SF0">
    <property type="entry name" value="L-SERYL-TRNA(SEC) SELENIUM TRANSFERASE"/>
    <property type="match status" value="1"/>
</dbReference>
<dbReference type="Pfam" id="PF12390">
    <property type="entry name" value="Se-cys_synth_N"/>
    <property type="match status" value="1"/>
</dbReference>
<dbReference type="Pfam" id="PF03841">
    <property type="entry name" value="SelA"/>
    <property type="match status" value="1"/>
</dbReference>
<dbReference type="SUPFAM" id="SSF53383">
    <property type="entry name" value="PLP-dependent transferases"/>
    <property type="match status" value="1"/>
</dbReference>
<comment type="function">
    <text evidence="1">Converts seryl-tRNA(Sec) to selenocysteinyl-tRNA(Sec) required for selenoprotein biosynthesis.</text>
</comment>
<comment type="catalytic activity">
    <reaction evidence="1">
        <text>L-seryl-tRNA(Sec) + selenophosphate + H(+) = L-selenocysteinyl-tRNA(Sec) + phosphate</text>
        <dbReference type="Rhea" id="RHEA:22728"/>
        <dbReference type="Rhea" id="RHEA-COMP:9742"/>
        <dbReference type="Rhea" id="RHEA-COMP:9743"/>
        <dbReference type="ChEBI" id="CHEBI:15378"/>
        <dbReference type="ChEBI" id="CHEBI:16144"/>
        <dbReference type="ChEBI" id="CHEBI:43474"/>
        <dbReference type="ChEBI" id="CHEBI:78533"/>
        <dbReference type="ChEBI" id="CHEBI:78573"/>
        <dbReference type="EC" id="2.9.1.1"/>
    </reaction>
</comment>
<comment type="cofactor">
    <cofactor evidence="1">
        <name>pyridoxal 5'-phosphate</name>
        <dbReference type="ChEBI" id="CHEBI:597326"/>
    </cofactor>
</comment>
<comment type="pathway">
    <text evidence="1">Aminoacyl-tRNA biosynthesis; selenocysteinyl-tRNA(Sec) biosynthesis; selenocysteinyl-tRNA(Sec) from L-seryl-tRNA(Sec) (bacterial route): step 1/1.</text>
</comment>
<comment type="subcellular location">
    <subcellularLocation>
        <location evidence="1">Cytoplasm</location>
    </subcellularLocation>
</comment>
<comment type="similarity">
    <text evidence="1">Belongs to the SelA family.</text>
</comment>
<name>SELA_STUS1</name>
<sequence length="469" mass="51137">MSSSHLPSVDKLLRDPACQPLQQRYGRQALLATLRDLLDELREPARRGQLAALELSEAVLAGRAGERLATQHKSRVRRVFNLTGTVLHTNLGRALLPDEAIEAITLAARYPLNLEFDLATGKRGDRDDLIEELIRELTGAEAVTVVNNNAAAVLLALNSLGARKEGIISRGELIEIGGAFRIPDIMARAGVKLHEVGTTNRTHAKDYEAAINPRSGLLMRVHTSNYSVQGFTASVATAELARIAHAHDLPLLEDLGSGSLLDLSRWGLPKEPTVQEALRDGADIVTFSGDKLLGGPQAGLIVGSKALIQKIKKNPLKRALRVDKLTLAALEAVLNLYRDPDRLAERLTSLRLLSRPQAEIRTQAERIAPTLAAVLGESWQVAVTDALGMIGSGAQPVARLPSAALCIRPQQPKRLRGRSLRQVEEALRCLPIPVLGRIDDDALWLDLRQLDDEPAFLQQLAHLQEELAR</sequence>
<feature type="chain" id="PRO_1000050378" description="L-seryl-tRNA(Sec) selenium transferase">
    <location>
        <begin position="1"/>
        <end position="469"/>
    </location>
</feature>
<feature type="modified residue" description="N6-(pyridoxal phosphate)lysine" evidence="1">
    <location>
        <position position="291"/>
    </location>
</feature>
<organism>
    <name type="scientific">Stutzerimonas stutzeri (strain A1501)</name>
    <name type="common">Pseudomonas stutzeri</name>
    <dbReference type="NCBI Taxonomy" id="379731"/>
    <lineage>
        <taxon>Bacteria</taxon>
        <taxon>Pseudomonadati</taxon>
        <taxon>Pseudomonadota</taxon>
        <taxon>Gammaproteobacteria</taxon>
        <taxon>Pseudomonadales</taxon>
        <taxon>Pseudomonadaceae</taxon>
        <taxon>Stutzerimonas</taxon>
    </lineage>
</organism>